<keyword id="KW-0143">Chaperone</keyword>
<keyword id="KW-0963">Cytoplasm</keyword>
<keyword id="KW-0378">Hydrolase</keyword>
<keyword id="KW-0690">Ribosome biogenesis</keyword>
<keyword id="KW-0694">RNA-binding</keyword>
<keyword id="KW-0804">Transcription</keyword>
<keyword id="KW-0889">Transcription antitermination</keyword>
<keyword id="KW-0805">Transcription regulation</keyword>
<feature type="chain" id="PRO_0000142556" description="Nus factor SuhB">
    <location>
        <begin position="1"/>
        <end position="269"/>
    </location>
</feature>
<feature type="binding site" evidence="1">
    <location>
        <begin position="85"/>
        <end position="88"/>
    </location>
    <ligand>
        <name>substrate</name>
    </ligand>
</feature>
<accession>Q8K9P6</accession>
<comment type="function">
    <text evidence="2">Part of the processive rRNA transcription and antitermination complex (rrnTAC). The complex forms an RNA-chaperone ring around the RNA exit tunnel of RNA polymerase (RNAP). It supports rapid transcription and antitermination of rRNA operons, cotranscriptional rRNA folding, and annealing of distal rRNA regions to allow correct ribosome biogenesis. This subunit may play a central role in organizing the structure.</text>
</comment>
<comment type="catalytic activity">
    <reaction evidence="2">
        <text>a myo-inositol phosphate + H2O = myo-inositol + phosphate</text>
        <dbReference type="Rhea" id="RHEA:24056"/>
        <dbReference type="ChEBI" id="CHEBI:15377"/>
        <dbReference type="ChEBI" id="CHEBI:17268"/>
        <dbReference type="ChEBI" id="CHEBI:43474"/>
        <dbReference type="ChEBI" id="CHEBI:84139"/>
        <dbReference type="EC" id="3.1.3.25"/>
    </reaction>
</comment>
<comment type="cofactor">
    <cofactor evidence="2">
        <name>Mg(2+)</name>
        <dbReference type="ChEBI" id="CHEBI:18420"/>
    </cofactor>
</comment>
<comment type="subunit">
    <text evidence="2">Homodimer. The rRNA transcription and antitermination complex (rrnTAC) consists of RNA polymerase (RNAP), NusA, NusB, NusE (rpsJ), NusG, SubB, ribosomal protein S4, DNA and precursor rRNA; S4 is more flexible than other subunits.</text>
</comment>
<comment type="subcellular location">
    <subcellularLocation>
        <location evidence="2">Cytoplasm</location>
    </subcellularLocation>
</comment>
<comment type="similarity">
    <text evidence="3">Belongs to the inositol monophosphatase superfamily.</text>
</comment>
<name>SUHB_BUCAP</name>
<proteinExistence type="inferred from homology"/>
<reference key="1">
    <citation type="journal article" date="2002" name="Science">
        <title>50 million years of genomic stasis in endosymbiotic bacteria.</title>
        <authorList>
            <person name="Tamas I."/>
            <person name="Klasson L."/>
            <person name="Canbaeck B."/>
            <person name="Naeslund A.K."/>
            <person name="Eriksson A.-S."/>
            <person name="Wernegreen J.J."/>
            <person name="Sandstroem J.P."/>
            <person name="Moran N.A."/>
            <person name="Andersson S.G.E."/>
        </authorList>
    </citation>
    <scope>NUCLEOTIDE SEQUENCE [LARGE SCALE GENOMIC DNA]</scope>
    <source>
        <strain>Sg</strain>
    </source>
</reference>
<gene>
    <name type="primary">suhB</name>
    <name type="ordered locus">BUsg_274</name>
</gene>
<sequence length="269" mass="30842">MHPMLNIAIRAIRKGGNIIVQNYDTQKFIKEDLDKKKIFIKNIMYKTYRIISEVIYKSYPNHIILNKNTDLIKNEKNTLWIINELDGKNNFIKNFPHFCISIAVIMKNNTEISVIYDPIRNDLFTAVKGQGSQLNGYRIRCNNINSLNYSTIAINLPLKHYAKSLFYLKIYKKLILSGISLRCTGSTLLDLAYVASGRIDCLFDFNPQSINLIAGKLQAREAGCLTSKFTENSEKKSEKGNFCTSNLTSSSKFMRLITEKISQCYSFNN</sequence>
<organism>
    <name type="scientific">Buchnera aphidicola subsp. Schizaphis graminum (strain Sg)</name>
    <dbReference type="NCBI Taxonomy" id="198804"/>
    <lineage>
        <taxon>Bacteria</taxon>
        <taxon>Pseudomonadati</taxon>
        <taxon>Pseudomonadota</taxon>
        <taxon>Gammaproteobacteria</taxon>
        <taxon>Enterobacterales</taxon>
        <taxon>Erwiniaceae</taxon>
        <taxon>Buchnera</taxon>
    </lineage>
</organism>
<dbReference type="EC" id="3.1.3.25" evidence="2"/>
<dbReference type="EMBL" id="AE013218">
    <property type="protein sequence ID" value="AAM67832.1"/>
    <property type="molecule type" value="Genomic_DNA"/>
</dbReference>
<dbReference type="RefSeq" id="WP_011053799.1">
    <property type="nucleotide sequence ID" value="NC_004061.1"/>
</dbReference>
<dbReference type="SMR" id="Q8K9P6"/>
<dbReference type="STRING" id="198804.BUsg_274"/>
<dbReference type="GeneID" id="93003744"/>
<dbReference type="KEGG" id="bas:BUsg_274"/>
<dbReference type="eggNOG" id="COG0483">
    <property type="taxonomic scope" value="Bacteria"/>
</dbReference>
<dbReference type="HOGENOM" id="CLU_044118_0_0_6"/>
<dbReference type="Proteomes" id="UP000000416">
    <property type="component" value="Chromosome"/>
</dbReference>
<dbReference type="GO" id="GO:0005737">
    <property type="term" value="C:cytoplasm"/>
    <property type="evidence" value="ECO:0007669"/>
    <property type="project" value="UniProtKB-SubCell"/>
</dbReference>
<dbReference type="GO" id="GO:0008934">
    <property type="term" value="F:inositol monophosphate 1-phosphatase activity"/>
    <property type="evidence" value="ECO:0007669"/>
    <property type="project" value="InterPro"/>
</dbReference>
<dbReference type="GO" id="GO:0003723">
    <property type="term" value="F:RNA binding"/>
    <property type="evidence" value="ECO:0007669"/>
    <property type="project" value="UniProtKB-KW"/>
</dbReference>
<dbReference type="GO" id="GO:0006020">
    <property type="term" value="P:inositol metabolic process"/>
    <property type="evidence" value="ECO:0007669"/>
    <property type="project" value="TreeGrafter"/>
</dbReference>
<dbReference type="GO" id="GO:0042254">
    <property type="term" value="P:ribosome biogenesis"/>
    <property type="evidence" value="ECO:0007669"/>
    <property type="project" value="UniProtKB-KW"/>
</dbReference>
<dbReference type="GO" id="GO:0007165">
    <property type="term" value="P:signal transduction"/>
    <property type="evidence" value="ECO:0007669"/>
    <property type="project" value="TreeGrafter"/>
</dbReference>
<dbReference type="GO" id="GO:0031564">
    <property type="term" value="P:transcription antitermination"/>
    <property type="evidence" value="ECO:0007669"/>
    <property type="project" value="UniProtKB-KW"/>
</dbReference>
<dbReference type="CDD" id="cd01639">
    <property type="entry name" value="IMPase"/>
    <property type="match status" value="1"/>
</dbReference>
<dbReference type="Gene3D" id="3.40.190.80">
    <property type="match status" value="1"/>
</dbReference>
<dbReference type="Gene3D" id="3.30.540.10">
    <property type="entry name" value="Fructose-1,6-Bisphosphatase, subunit A, domain 1"/>
    <property type="match status" value="1"/>
</dbReference>
<dbReference type="InterPro" id="IPR033942">
    <property type="entry name" value="IMPase"/>
</dbReference>
<dbReference type="InterPro" id="IPR000760">
    <property type="entry name" value="Inositol_monophosphatase-like"/>
</dbReference>
<dbReference type="PANTHER" id="PTHR20854">
    <property type="entry name" value="INOSITOL MONOPHOSPHATASE"/>
    <property type="match status" value="1"/>
</dbReference>
<dbReference type="PANTHER" id="PTHR20854:SF4">
    <property type="entry name" value="INOSITOL-1-MONOPHOSPHATASE-RELATED"/>
    <property type="match status" value="1"/>
</dbReference>
<dbReference type="Pfam" id="PF00459">
    <property type="entry name" value="Inositol_P"/>
    <property type="match status" value="1"/>
</dbReference>
<dbReference type="PRINTS" id="PR00377">
    <property type="entry name" value="IMPHPHTASES"/>
</dbReference>
<dbReference type="SUPFAM" id="SSF56655">
    <property type="entry name" value="Carbohydrate phosphatase"/>
    <property type="match status" value="1"/>
</dbReference>
<protein>
    <recommendedName>
        <fullName evidence="2">Nus factor SuhB</fullName>
    </recommendedName>
    <alternativeName>
        <fullName>Inositol-1-monophosphatase</fullName>
        <shortName>I-1-Pase</shortName>
        <shortName>IMPase</shortName>
        <shortName>Inositol-1-phosphatase</shortName>
        <ecNumber evidence="2">3.1.3.25</ecNumber>
    </alternativeName>
</protein>
<evidence type="ECO:0000250" key="1"/>
<evidence type="ECO:0000250" key="2">
    <source>
        <dbReference type="UniProtKB" id="P0ADG4"/>
    </source>
</evidence>
<evidence type="ECO:0000305" key="3"/>